<name>CP086_MACFA</name>
<keyword id="KW-1185">Reference proteome</keyword>
<gene>
    <name type="ORF">QccE-19755</name>
</gene>
<accession>Q9GKT8</accession>
<protein>
    <recommendedName>
        <fullName>Uncharacterized protein C16orf86 homolog</fullName>
    </recommendedName>
</protein>
<evidence type="ECO:0000256" key="1">
    <source>
        <dbReference type="SAM" id="MobiDB-lite"/>
    </source>
</evidence>
<evidence type="ECO:0000305" key="2"/>
<feature type="chain" id="PRO_0000318962" description="Uncharacterized protein C16orf86 homolog">
    <location>
        <begin position="1"/>
        <end position="77"/>
    </location>
</feature>
<feature type="region of interest" description="Disordered" evidence="1">
    <location>
        <begin position="1"/>
        <end position="77"/>
    </location>
</feature>
<feature type="compositionally biased region" description="Basic and acidic residues" evidence="1">
    <location>
        <begin position="1"/>
        <end position="24"/>
    </location>
</feature>
<feature type="compositionally biased region" description="Basic and acidic residues" evidence="1">
    <location>
        <begin position="37"/>
        <end position="58"/>
    </location>
</feature>
<feature type="compositionally biased region" description="Basic residues" evidence="1">
    <location>
        <begin position="66"/>
        <end position="77"/>
    </location>
</feature>
<feature type="non-terminal residue">
    <location>
        <position position="1"/>
    </location>
</feature>
<feature type="non-terminal residue">
    <location>
        <position position="77"/>
    </location>
</feature>
<organism>
    <name type="scientific">Macaca fascicularis</name>
    <name type="common">Crab-eating macaque</name>
    <name type="synonym">Cynomolgus monkey</name>
    <dbReference type="NCBI Taxonomy" id="9541"/>
    <lineage>
        <taxon>Eukaryota</taxon>
        <taxon>Metazoa</taxon>
        <taxon>Chordata</taxon>
        <taxon>Craniata</taxon>
        <taxon>Vertebrata</taxon>
        <taxon>Euteleostomi</taxon>
        <taxon>Mammalia</taxon>
        <taxon>Eutheria</taxon>
        <taxon>Euarchontoglires</taxon>
        <taxon>Primates</taxon>
        <taxon>Haplorrhini</taxon>
        <taxon>Catarrhini</taxon>
        <taxon>Cercopithecidae</taxon>
        <taxon>Cercopithecinae</taxon>
        <taxon>Macaca</taxon>
    </lineage>
</organism>
<proteinExistence type="evidence at transcript level"/>
<comment type="sequence caution" evidence="2">
    <conflict type="erroneous translation">
        <sequence resource="EMBL-CDS" id="BAB18995"/>
    </conflict>
    <text>Wrong choice of CDS.</text>
</comment>
<reference key="1">
    <citation type="journal article" date="2001" name="Gene">
        <title>Assignment of 118 novel cDNAs of cynomolgus monkey brain to human chromosomes.</title>
        <authorList>
            <person name="Osada N."/>
            <person name="Hida M."/>
            <person name="Kususda J."/>
            <person name="Tanuma R."/>
            <person name="Iseki K."/>
            <person name="Hirata M."/>
            <person name="Suto Y."/>
            <person name="Hirai M."/>
            <person name="Terao K."/>
            <person name="Suzuki Y."/>
            <person name="Sugano S."/>
            <person name="Hashimoto K."/>
        </authorList>
    </citation>
    <scope>NUCLEOTIDE SEQUENCE [LARGE SCALE MRNA]</scope>
    <source>
        <tissue>Brain cortex</tissue>
    </source>
</reference>
<reference key="2">
    <citation type="journal article" date="2001" name="Gene">
        <authorList>
            <person name="Osada N."/>
            <person name="Hida M."/>
            <person name="Kusuda J."/>
            <person name="Tanuma R."/>
            <person name="Iseki K."/>
            <person name="Hirata M."/>
            <person name="Suto Y."/>
            <person name="Hirai M."/>
            <person name="Terao K."/>
            <person name="Suzuki Y."/>
            <person name="Sugano S."/>
            <person name="Hashimoto K."/>
            <person name="Kususda J."/>
        </authorList>
    </citation>
    <scope>ERRATUM OF PUBMED:11574149</scope>
</reference>
<sequence length="77" mass="8362">CPVAEEHFLVPAHEARGTQGEDQRPAGAASELELQEEGPKLGEERPKPEAGALEERGPRPVVSIVRPRHGPKRKPAK</sequence>
<dbReference type="EMBL" id="AB052141">
    <property type="protein sequence ID" value="BAB18995.1"/>
    <property type="status" value="ALT_SEQ"/>
    <property type="molecule type" value="mRNA"/>
</dbReference>
<dbReference type="STRING" id="9541.ENSMFAP00000025907"/>
<dbReference type="eggNOG" id="ENOG502SVW5">
    <property type="taxonomic scope" value="Eukaryota"/>
</dbReference>
<dbReference type="Proteomes" id="UP000233100">
    <property type="component" value="Unplaced"/>
</dbReference>
<dbReference type="InterPro" id="IPR031516">
    <property type="entry name" value="DUF4691"/>
</dbReference>
<dbReference type="PANTHER" id="PTHR37867">
    <property type="entry name" value="CHROMOSOME 16 OPEN READING FRAME 86"/>
    <property type="match status" value="1"/>
</dbReference>
<dbReference type="PANTHER" id="PTHR37867:SF1">
    <property type="entry name" value="CHROMOSOME 16 OPEN READING FRAME 86"/>
    <property type="match status" value="1"/>
</dbReference>
<dbReference type="Pfam" id="PF15762">
    <property type="entry name" value="DUF4691"/>
    <property type="match status" value="1"/>
</dbReference>